<gene>
    <name type="primary">bioF</name>
    <name type="ordered locus">Plav_0039</name>
</gene>
<sequence length="389" mass="41649">METLDGFAREKLDALEAQALRRRLVETDRREGAIAFREGRRLVSFCCNDYLNLSQHPDVKRAAVEATGKYGTGSGASRLVSGNHPLFGELERRLADWKQTEDCVVFGSGYMANMGIIPSLVREGDLIIADELSHACLLSGSKLSGARVAIFRHNDIAHLEELLGAHRGGAKHCLILTDGIFSMDGDAAPVEALAALAAQHDAWLMTDDAHGIGVVGHEGRGSSFMGERKAAVPLQMGTLSKAVGGYGGYLCASAPVVDLIRTRARTLIYSTGLPPAAVAASIAALDFIRGNPDYCKRPVEKARSFTRALGLADPVSPIVPLILGDAEVTLAASALLEAEGYLVTGIRPPTVPEGTARLRFTFTAEHDDADIARLATLVRERIIQRRAAE</sequence>
<keyword id="KW-0093">Biotin biosynthesis</keyword>
<keyword id="KW-0663">Pyridoxal phosphate</keyword>
<keyword id="KW-1185">Reference proteome</keyword>
<keyword id="KW-0808">Transferase</keyword>
<organism>
    <name type="scientific">Parvibaculum lavamentivorans (strain DS-1 / DSM 13023 / NCIMB 13966)</name>
    <dbReference type="NCBI Taxonomy" id="402881"/>
    <lineage>
        <taxon>Bacteria</taxon>
        <taxon>Pseudomonadati</taxon>
        <taxon>Pseudomonadota</taxon>
        <taxon>Alphaproteobacteria</taxon>
        <taxon>Hyphomicrobiales</taxon>
        <taxon>Parvibaculaceae</taxon>
        <taxon>Parvibaculum</taxon>
    </lineage>
</organism>
<dbReference type="EC" id="2.3.1.47"/>
<dbReference type="EMBL" id="CP000774">
    <property type="protein sequence ID" value="ABS61662.1"/>
    <property type="status" value="ALT_INIT"/>
    <property type="molecule type" value="Genomic_DNA"/>
</dbReference>
<dbReference type="SMR" id="A7HP29"/>
<dbReference type="STRING" id="402881.Plav_0039"/>
<dbReference type="KEGG" id="pla:Plav_0039"/>
<dbReference type="eggNOG" id="COG0156">
    <property type="taxonomic scope" value="Bacteria"/>
</dbReference>
<dbReference type="HOGENOM" id="CLU_015846_11_2_5"/>
<dbReference type="OrthoDB" id="9807157at2"/>
<dbReference type="UniPathway" id="UPA00078"/>
<dbReference type="Proteomes" id="UP000006377">
    <property type="component" value="Chromosome"/>
</dbReference>
<dbReference type="GO" id="GO:0008710">
    <property type="term" value="F:8-amino-7-oxononanoate synthase activity"/>
    <property type="evidence" value="ECO:0007669"/>
    <property type="project" value="UniProtKB-EC"/>
</dbReference>
<dbReference type="GO" id="GO:0030170">
    <property type="term" value="F:pyridoxal phosphate binding"/>
    <property type="evidence" value="ECO:0007669"/>
    <property type="project" value="InterPro"/>
</dbReference>
<dbReference type="GO" id="GO:0009102">
    <property type="term" value="P:biotin biosynthetic process"/>
    <property type="evidence" value="ECO:0007669"/>
    <property type="project" value="UniProtKB-UniPathway"/>
</dbReference>
<dbReference type="CDD" id="cd06454">
    <property type="entry name" value="KBL_like"/>
    <property type="match status" value="1"/>
</dbReference>
<dbReference type="Gene3D" id="3.90.1150.10">
    <property type="entry name" value="Aspartate Aminotransferase, domain 1"/>
    <property type="match status" value="1"/>
</dbReference>
<dbReference type="Gene3D" id="3.40.640.10">
    <property type="entry name" value="Type I PLP-dependent aspartate aminotransferase-like (Major domain)"/>
    <property type="match status" value="1"/>
</dbReference>
<dbReference type="InterPro" id="IPR001917">
    <property type="entry name" value="Aminotrans_II_pyridoxalP_BS"/>
</dbReference>
<dbReference type="InterPro" id="IPR004839">
    <property type="entry name" value="Aminotransferase_I/II_large"/>
</dbReference>
<dbReference type="InterPro" id="IPR050087">
    <property type="entry name" value="AON_synthase_class-II"/>
</dbReference>
<dbReference type="InterPro" id="IPR004723">
    <property type="entry name" value="AONS_Archaea/Proteobacteria"/>
</dbReference>
<dbReference type="InterPro" id="IPR015424">
    <property type="entry name" value="PyrdxlP-dep_Trfase"/>
</dbReference>
<dbReference type="InterPro" id="IPR015421">
    <property type="entry name" value="PyrdxlP-dep_Trfase_major"/>
</dbReference>
<dbReference type="InterPro" id="IPR015422">
    <property type="entry name" value="PyrdxlP-dep_Trfase_small"/>
</dbReference>
<dbReference type="NCBIfam" id="TIGR00858">
    <property type="entry name" value="bioF"/>
    <property type="match status" value="1"/>
</dbReference>
<dbReference type="PANTHER" id="PTHR13693:SF100">
    <property type="entry name" value="8-AMINO-7-OXONONANOATE SYNTHASE"/>
    <property type="match status" value="1"/>
</dbReference>
<dbReference type="PANTHER" id="PTHR13693">
    <property type="entry name" value="CLASS II AMINOTRANSFERASE/8-AMINO-7-OXONONANOATE SYNTHASE"/>
    <property type="match status" value="1"/>
</dbReference>
<dbReference type="Pfam" id="PF00155">
    <property type="entry name" value="Aminotran_1_2"/>
    <property type="match status" value="1"/>
</dbReference>
<dbReference type="SUPFAM" id="SSF53383">
    <property type="entry name" value="PLP-dependent transferases"/>
    <property type="match status" value="1"/>
</dbReference>
<dbReference type="PROSITE" id="PS00599">
    <property type="entry name" value="AA_TRANSFER_CLASS_2"/>
    <property type="match status" value="1"/>
</dbReference>
<protein>
    <recommendedName>
        <fullName>Putative 8-amino-7-oxononanoate synthase</fullName>
        <shortName>AONS</shortName>
        <ecNumber>2.3.1.47</ecNumber>
    </recommendedName>
    <alternativeName>
        <fullName>7-keto-8-amino-pelargonic acid synthase</fullName>
        <shortName>7-KAP synthase</shortName>
    </alternativeName>
    <alternativeName>
        <fullName>8-amino-7-ketopelargonate synthase</fullName>
    </alternativeName>
</protein>
<feature type="chain" id="PRO_0000381059" description="Putative 8-amino-7-oxononanoate synthase">
    <location>
        <begin position="1"/>
        <end position="389"/>
    </location>
</feature>
<feature type="binding site" evidence="1">
    <location>
        <position position="22"/>
    </location>
    <ligand>
        <name>substrate</name>
    </ligand>
</feature>
<feature type="binding site" evidence="1">
    <location>
        <begin position="109"/>
        <end position="110"/>
    </location>
    <ligand>
        <name>pyridoxal 5'-phosphate</name>
        <dbReference type="ChEBI" id="CHEBI:597326"/>
    </ligand>
</feature>
<feature type="binding site" evidence="1">
    <location>
        <position position="134"/>
    </location>
    <ligand>
        <name>substrate</name>
    </ligand>
</feature>
<feature type="binding site" evidence="1">
    <location>
        <position position="182"/>
    </location>
    <ligand>
        <name>pyridoxal 5'-phosphate</name>
        <dbReference type="ChEBI" id="CHEBI:597326"/>
    </ligand>
</feature>
<feature type="binding site" evidence="1">
    <location>
        <begin position="207"/>
        <end position="210"/>
    </location>
    <ligand>
        <name>pyridoxal 5'-phosphate</name>
        <dbReference type="ChEBI" id="CHEBI:597326"/>
    </ligand>
</feature>
<feature type="binding site" evidence="1">
    <location>
        <begin position="238"/>
        <end position="241"/>
    </location>
    <ligand>
        <name>pyridoxal 5'-phosphate</name>
        <dbReference type="ChEBI" id="CHEBI:597326"/>
    </ligand>
</feature>
<feature type="binding site" evidence="1">
    <location>
        <position position="350"/>
    </location>
    <ligand>
        <name>substrate</name>
    </ligand>
</feature>
<feature type="modified residue" description="N6-(pyridoxal phosphate)lysine" evidence="1">
    <location>
        <position position="241"/>
    </location>
</feature>
<name>BIOF_PARL1</name>
<reference key="1">
    <citation type="journal article" date="2011" name="Stand. Genomic Sci.">
        <title>Complete genome sequence of Parvibaculum lavamentivorans type strain (DS-1(T)).</title>
        <authorList>
            <person name="Schleheck D."/>
            <person name="Weiss M."/>
            <person name="Pitluck S."/>
            <person name="Bruce D."/>
            <person name="Land M.L."/>
            <person name="Han S."/>
            <person name="Saunders E."/>
            <person name="Tapia R."/>
            <person name="Detter C."/>
            <person name="Brettin T."/>
            <person name="Han J."/>
            <person name="Woyke T."/>
            <person name="Goodwin L."/>
            <person name="Pennacchio L."/>
            <person name="Nolan M."/>
            <person name="Cook A.M."/>
            <person name="Kjelleberg S."/>
            <person name="Thomas T."/>
        </authorList>
    </citation>
    <scope>NUCLEOTIDE SEQUENCE [LARGE SCALE GENOMIC DNA]</scope>
    <source>
        <strain>DS-1 / DSM 13023 / NCIMB 13966</strain>
    </source>
</reference>
<evidence type="ECO:0000250" key="1"/>
<evidence type="ECO:0000305" key="2"/>
<comment type="function">
    <text evidence="1">Catalyzes the decarboxylative condensation of pimeloyl-[acyl-carrier protein] and L-alanine to produce 8-amino-7-oxononanoate (AON), [acyl-carrier protein], and carbon dioxide.</text>
</comment>
<comment type="catalytic activity">
    <reaction>
        <text>6-carboxyhexanoyl-[ACP] + L-alanine + H(+) = (8S)-8-amino-7-oxononanoate + holo-[ACP] + CO2</text>
        <dbReference type="Rhea" id="RHEA:42288"/>
        <dbReference type="Rhea" id="RHEA-COMP:9685"/>
        <dbReference type="Rhea" id="RHEA-COMP:9955"/>
        <dbReference type="ChEBI" id="CHEBI:15378"/>
        <dbReference type="ChEBI" id="CHEBI:16526"/>
        <dbReference type="ChEBI" id="CHEBI:57972"/>
        <dbReference type="ChEBI" id="CHEBI:64479"/>
        <dbReference type="ChEBI" id="CHEBI:78846"/>
        <dbReference type="ChEBI" id="CHEBI:149468"/>
        <dbReference type="EC" id="2.3.1.47"/>
    </reaction>
</comment>
<comment type="cofactor">
    <cofactor evidence="1">
        <name>pyridoxal 5'-phosphate</name>
        <dbReference type="ChEBI" id="CHEBI:597326"/>
    </cofactor>
</comment>
<comment type="pathway">
    <text>Cofactor biosynthesis; biotin biosynthesis.</text>
</comment>
<comment type="subunit">
    <text evidence="1">Homodimer.</text>
</comment>
<comment type="similarity">
    <text evidence="2">Belongs to the class-II pyridoxal-phosphate-dependent aminotransferase family. BioF subfamily.</text>
</comment>
<comment type="sequence caution" evidence="2">
    <conflict type="erroneous initiation">
        <sequence resource="EMBL-CDS" id="ABS61662"/>
    </conflict>
    <text>Extended N-terminus.</text>
</comment>
<accession>A7HP29</accession>
<proteinExistence type="inferred from homology"/>